<comment type="function">
    <text>Inhibits trypsin but not chymotrypsin. The inhibitor consists of 2 domains and has 2 sites of interaction with trypsin.</text>
</comment>
<comment type="subunit">
    <text>Monomer. Although dimerization may occur in solution.</text>
</comment>
<comment type="tissue specificity">
    <text>Seed.</text>
</comment>
<comment type="similarity">
    <text evidence="2">Belongs to the Bowman-Birk serine protease inhibitor family.</text>
</comment>
<name>IBB1_DIOGL</name>
<reference key="1">
    <citation type="journal article" date="1999" name="Biochem. Biophys. Res. Commun.">
        <title>Primary structure of Dioclea glabra trypsin inhibitor, DgTI, a Bowman-Birk inhibitor.</title>
        <authorList>
            <person name="Bueno N.R."/>
            <person name="Fritz H."/>
            <person name="Auerswald E.A."/>
            <person name="Mentele R."/>
            <person name="Sampaio M.U."/>
            <person name="Sampaio C.A.M."/>
            <person name="Oliva M.L.V."/>
        </authorList>
    </citation>
    <scope>PROTEIN SEQUENCE</scope>
    <source>
        <tissue>Seed</tissue>
    </source>
</reference>
<feature type="chain" id="PRO_0000105837" description="Bowman-Birk type proteinase inhibitor 1">
    <location>
        <begin position="1"/>
        <end position="67"/>
    </location>
</feature>
<feature type="site" description="Reactive bond for trypsin">
    <location>
        <begin position="13"/>
        <end position="14"/>
    </location>
</feature>
<feature type="site" description="Reactive bond for trypsin">
    <location>
        <begin position="40"/>
        <end position="41"/>
    </location>
</feature>
<feature type="disulfide bond" evidence="1">
    <location>
        <begin position="5"/>
        <end position="59"/>
    </location>
</feature>
<feature type="disulfide bond" evidence="1">
    <location>
        <begin position="6"/>
        <end position="21"/>
    </location>
</feature>
<feature type="disulfide bond" evidence="1">
    <location>
        <begin position="9"/>
        <end position="55"/>
    </location>
</feature>
<feature type="disulfide bond" evidence="1">
    <location>
        <begin position="11"/>
        <end position="19"/>
    </location>
</feature>
<feature type="disulfide bond" evidence="1">
    <location>
        <begin position="29"/>
        <end position="36"/>
    </location>
</feature>
<feature type="disulfide bond" evidence="1">
    <location>
        <begin position="33"/>
        <end position="48"/>
    </location>
</feature>
<feature type="disulfide bond" evidence="1">
    <location>
        <begin position="38"/>
        <end position="46"/>
    </location>
</feature>
<protein>
    <recommendedName>
        <fullName>Bowman-Birk type proteinase inhibitor 1</fullName>
    </recommendedName>
    <alternativeName>
        <fullName>Bowman-Birk type proteinase inhibitor I</fullName>
    </alternativeName>
    <alternativeName>
        <fullName>DgTI</fullName>
    </alternativeName>
</protein>
<organism>
    <name type="scientific">Dioclea glabra</name>
    <dbReference type="NCBI Taxonomy" id="124593"/>
    <lineage>
        <taxon>Eukaryota</taxon>
        <taxon>Viridiplantae</taxon>
        <taxon>Streptophyta</taxon>
        <taxon>Embryophyta</taxon>
        <taxon>Tracheophyta</taxon>
        <taxon>Spermatophyta</taxon>
        <taxon>Magnoliopsida</taxon>
        <taxon>eudicotyledons</taxon>
        <taxon>Gunneridae</taxon>
        <taxon>Pentapetalae</taxon>
        <taxon>rosids</taxon>
        <taxon>fabids</taxon>
        <taxon>Fabales</taxon>
        <taxon>Fabaceae</taxon>
        <taxon>Papilionoideae</taxon>
        <taxon>50 kb inversion clade</taxon>
        <taxon>NPAAA clade</taxon>
        <taxon>indigoferoid/millettioid clade</taxon>
        <taxon>Phaseoleae</taxon>
        <taxon>Macropsychanthus</taxon>
    </lineage>
</organism>
<dbReference type="SMR" id="P82469"/>
<dbReference type="MEROPS" id="I12.001"/>
<dbReference type="GO" id="GO:0005576">
    <property type="term" value="C:extracellular region"/>
    <property type="evidence" value="ECO:0007669"/>
    <property type="project" value="InterPro"/>
</dbReference>
<dbReference type="GO" id="GO:0004867">
    <property type="term" value="F:serine-type endopeptidase inhibitor activity"/>
    <property type="evidence" value="ECO:0007669"/>
    <property type="project" value="UniProtKB-KW"/>
</dbReference>
<dbReference type="CDD" id="cd00023">
    <property type="entry name" value="BBI"/>
    <property type="match status" value="1"/>
</dbReference>
<dbReference type="FunFam" id="2.10.69.10:FF:000001">
    <property type="entry name" value="Bowman-Birk type proteinase inhibitor"/>
    <property type="match status" value="1"/>
</dbReference>
<dbReference type="Gene3D" id="2.10.69.10">
    <property type="entry name" value="Cysteine Protease (Bromelain) Inhibitor, subunit H"/>
    <property type="match status" value="1"/>
</dbReference>
<dbReference type="InterPro" id="IPR035995">
    <property type="entry name" value="Bowman-Birk_prot_inh"/>
</dbReference>
<dbReference type="InterPro" id="IPR000877">
    <property type="entry name" value="Prot_inh_BBI"/>
</dbReference>
<dbReference type="Pfam" id="PF00228">
    <property type="entry name" value="Bowman-Birk_leg"/>
    <property type="match status" value="2"/>
</dbReference>
<dbReference type="SMART" id="SM00269">
    <property type="entry name" value="BowB"/>
    <property type="match status" value="1"/>
</dbReference>
<dbReference type="SUPFAM" id="SSF57247">
    <property type="entry name" value="Bowman-Birk inhibitor, BBI"/>
    <property type="match status" value="1"/>
</dbReference>
<dbReference type="PROSITE" id="PS00281">
    <property type="entry name" value="BOWMAN_BIRK"/>
    <property type="match status" value="1"/>
</dbReference>
<proteinExistence type="evidence at protein level"/>
<keyword id="KW-0903">Direct protein sequencing</keyword>
<keyword id="KW-1015">Disulfide bond</keyword>
<keyword id="KW-0646">Protease inhibitor</keyword>
<keyword id="KW-0722">Serine protease inhibitor</keyword>
<accession>P82469</accession>
<sequence>SSGPCCDRCRCTKSEPPQCQCQDVRLNSCHSACEACVCSHSMPGLCSCLDITHFCHEPCKSSGDDED</sequence>
<evidence type="ECO:0000250" key="1">
    <source>
        <dbReference type="UniProtKB" id="P80321"/>
    </source>
</evidence>
<evidence type="ECO:0000305" key="2"/>